<comment type="subunit">
    <text evidence="1">Interacts with CCNT2; down-regulates CCNT2-mediated activation of viral promoters during herpes simplex virus 1/HHV-1 infection. Found in a complex with RMC1, CCZ1 MON1A and MON1B.</text>
</comment>
<comment type="similarity">
    <text evidence="3">Belongs to the MON1/SAND family.</text>
</comment>
<evidence type="ECO:0000250" key="1">
    <source>
        <dbReference type="UniProtKB" id="Q7L1V2"/>
    </source>
</evidence>
<evidence type="ECO:0000256" key="2">
    <source>
        <dbReference type="SAM" id="MobiDB-lite"/>
    </source>
</evidence>
<evidence type="ECO:0000305" key="3"/>
<sequence>MEAGGDTAAPVPGGAEDLEDTQFPSEETREGGGVHAVPLDPEGEGLEETGSKDKDQPPSPSPPPQSEAPSSTSRLWSPAAPENSPTRSPESSSGGQGGDPSDEEWRSQRKHVFVLSEAGKPIYLRYGSVEALSATMGVMTALVSFVQSAGDTIRAIYAEDHKLVFLQQGPLLLVAMSRTSQSAAQLRGELLAVHAQIVSTLTRASVARIFAHKQNYDLRRLLAGSERTLDRLLDSVEQDPGALLLGAVRCVPLARPLRDALGALLRRCTAPGLALSVLAVGGRLITAAQERNVLAECRLDPADLQLLLDWVGAPAFAAGEAWAPVCLPRFNPDGFFYAYVARLDAMPVCLLLLGTQREAFHAMAACRRLVEDGMHALGAMRVLGEAAGFSNASSASAPAYSVQAVGAPGLRHFLYKPLDIPDHHRQLPQFTSPELEAPYSREEERQRLSDLYHRLHARLHNTSRPLRLIYHVAEKETLLAWVTSKFELYTCLSPLVTKAGAILVVTKLLRWVKKEEDRLFIRYPPKYSTPPAPSTDQAAHNGLFTGL</sequence>
<name>MON1B_MACFA</name>
<feature type="chain" id="PRO_0000285766" description="Vacuolar fusion protein MON1 homolog B">
    <location>
        <begin position="1"/>
        <end position="547"/>
    </location>
</feature>
<feature type="region of interest" description="Disordered" evidence="2">
    <location>
        <begin position="1"/>
        <end position="106"/>
    </location>
</feature>
<feature type="compositionally biased region" description="Pro residues" evidence="2">
    <location>
        <begin position="57"/>
        <end position="66"/>
    </location>
</feature>
<feature type="modified residue" description="N-acetylmethionine" evidence="1">
    <location>
        <position position="1"/>
    </location>
</feature>
<feature type="modified residue" description="Phosphoserine" evidence="1">
    <location>
        <position position="59"/>
    </location>
</feature>
<feature type="modified residue" description="Phosphoserine" evidence="1">
    <location>
        <position position="61"/>
    </location>
</feature>
<reference key="1">
    <citation type="submission" date="2005-06" db="EMBL/GenBank/DDBJ databases">
        <title>DNA sequences of macaque genes expressed in brain or testis and its evolutionary implications.</title>
        <authorList>
            <consortium name="International consortium for macaque cDNA sequencing and analysis"/>
        </authorList>
    </citation>
    <scope>NUCLEOTIDE SEQUENCE [LARGE SCALE MRNA]</scope>
    <source>
        <tissue>Testis</tissue>
    </source>
</reference>
<protein>
    <recommendedName>
        <fullName>Vacuolar fusion protein MON1 homolog B</fullName>
    </recommendedName>
</protein>
<organism>
    <name type="scientific">Macaca fascicularis</name>
    <name type="common">Crab-eating macaque</name>
    <name type="synonym">Cynomolgus monkey</name>
    <dbReference type="NCBI Taxonomy" id="9541"/>
    <lineage>
        <taxon>Eukaryota</taxon>
        <taxon>Metazoa</taxon>
        <taxon>Chordata</taxon>
        <taxon>Craniata</taxon>
        <taxon>Vertebrata</taxon>
        <taxon>Euteleostomi</taxon>
        <taxon>Mammalia</taxon>
        <taxon>Eutheria</taxon>
        <taxon>Euarchontoglires</taxon>
        <taxon>Primates</taxon>
        <taxon>Haplorrhini</taxon>
        <taxon>Catarrhini</taxon>
        <taxon>Cercopithecidae</taxon>
        <taxon>Cercopithecinae</taxon>
        <taxon>Macaca</taxon>
    </lineage>
</organism>
<proteinExistence type="evidence at transcript level"/>
<gene>
    <name type="primary">MON1B</name>
    <name type="ORF">QtsA-10422</name>
</gene>
<dbReference type="EMBL" id="AB178970">
    <property type="protein sequence ID" value="BAE02021.1"/>
    <property type="molecule type" value="mRNA"/>
</dbReference>
<dbReference type="RefSeq" id="NP_001271551.1">
    <property type="nucleotide sequence ID" value="NM_001284622.1"/>
</dbReference>
<dbReference type="SMR" id="Q4R4E4"/>
<dbReference type="STRING" id="9541.ENSMFAP00000041793"/>
<dbReference type="eggNOG" id="KOG0997">
    <property type="taxonomic scope" value="Eukaryota"/>
</dbReference>
<dbReference type="Proteomes" id="UP000233100">
    <property type="component" value="Unplaced"/>
</dbReference>
<dbReference type="GO" id="GO:0005737">
    <property type="term" value="C:cytoplasm"/>
    <property type="evidence" value="ECO:0000250"/>
    <property type="project" value="UniProtKB"/>
</dbReference>
<dbReference type="GO" id="GO:0035658">
    <property type="term" value="C:Mon1-Ccz1 complex"/>
    <property type="evidence" value="ECO:0000250"/>
    <property type="project" value="UniProtKB"/>
</dbReference>
<dbReference type="GO" id="GO:0006623">
    <property type="term" value="P:protein targeting to vacuole"/>
    <property type="evidence" value="ECO:0007669"/>
    <property type="project" value="InterPro"/>
</dbReference>
<dbReference type="GO" id="GO:0016192">
    <property type="term" value="P:vesicle-mediated transport"/>
    <property type="evidence" value="ECO:0007669"/>
    <property type="project" value="InterPro"/>
</dbReference>
<dbReference type="InterPro" id="IPR043972">
    <property type="entry name" value="FUZ/MON1/HPS1_longin_1"/>
</dbReference>
<dbReference type="InterPro" id="IPR043971">
    <property type="entry name" value="FUZ/MON1/HPS1_longin_2"/>
</dbReference>
<dbReference type="InterPro" id="IPR043970">
    <property type="entry name" value="FUZ/MON1/HPS1_longin_3"/>
</dbReference>
<dbReference type="InterPro" id="IPR004353">
    <property type="entry name" value="Mon1"/>
</dbReference>
<dbReference type="PANTHER" id="PTHR13027">
    <property type="entry name" value="SAND PROTEIN-RELATED"/>
    <property type="match status" value="1"/>
</dbReference>
<dbReference type="PANTHER" id="PTHR13027:SF13">
    <property type="entry name" value="VACUOLAR FUSION PROTEIN MON1 HOMOLOG B"/>
    <property type="match status" value="1"/>
</dbReference>
<dbReference type="Pfam" id="PF19036">
    <property type="entry name" value="Fuz_longin_1"/>
    <property type="match status" value="1"/>
</dbReference>
<dbReference type="Pfam" id="PF19037">
    <property type="entry name" value="Fuz_longin_2"/>
    <property type="match status" value="1"/>
</dbReference>
<dbReference type="Pfam" id="PF19038">
    <property type="entry name" value="Fuz_longin_3"/>
    <property type="match status" value="1"/>
</dbReference>
<dbReference type="PRINTS" id="PR01546">
    <property type="entry name" value="YEAST73DUF"/>
</dbReference>
<keyword id="KW-0007">Acetylation</keyword>
<keyword id="KW-0597">Phosphoprotein</keyword>
<keyword id="KW-1185">Reference proteome</keyword>
<accession>Q4R4E4</accession>